<keyword id="KW-0687">Ribonucleoprotein</keyword>
<keyword id="KW-0689">Ribosomal protein</keyword>
<accession>C1ET72</accession>
<name>RL13_BACC3</name>
<proteinExistence type="inferred from homology"/>
<protein>
    <recommendedName>
        <fullName evidence="1">Large ribosomal subunit protein uL13</fullName>
    </recommendedName>
    <alternativeName>
        <fullName evidence="2">50S ribosomal protein L13</fullName>
    </alternativeName>
</protein>
<organism>
    <name type="scientific">Bacillus cereus (strain 03BB102)</name>
    <dbReference type="NCBI Taxonomy" id="572264"/>
    <lineage>
        <taxon>Bacteria</taxon>
        <taxon>Bacillati</taxon>
        <taxon>Bacillota</taxon>
        <taxon>Bacilli</taxon>
        <taxon>Bacillales</taxon>
        <taxon>Bacillaceae</taxon>
        <taxon>Bacillus</taxon>
        <taxon>Bacillus cereus group</taxon>
    </lineage>
</organism>
<dbReference type="EMBL" id="CP001407">
    <property type="protein sequence ID" value="ACO26822.1"/>
    <property type="molecule type" value="Genomic_DNA"/>
</dbReference>
<dbReference type="RefSeq" id="WP_001260793.1">
    <property type="nucleotide sequence ID" value="NZ_CP009318.1"/>
</dbReference>
<dbReference type="SMR" id="C1ET72"/>
<dbReference type="GeneID" id="93010910"/>
<dbReference type="KEGG" id="bcx:BCA_0173"/>
<dbReference type="PATRIC" id="fig|572264.18.peg.207"/>
<dbReference type="Proteomes" id="UP000002210">
    <property type="component" value="Chromosome"/>
</dbReference>
<dbReference type="GO" id="GO:0022625">
    <property type="term" value="C:cytosolic large ribosomal subunit"/>
    <property type="evidence" value="ECO:0007669"/>
    <property type="project" value="TreeGrafter"/>
</dbReference>
<dbReference type="GO" id="GO:0003729">
    <property type="term" value="F:mRNA binding"/>
    <property type="evidence" value="ECO:0007669"/>
    <property type="project" value="TreeGrafter"/>
</dbReference>
<dbReference type="GO" id="GO:0003735">
    <property type="term" value="F:structural constituent of ribosome"/>
    <property type="evidence" value="ECO:0007669"/>
    <property type="project" value="InterPro"/>
</dbReference>
<dbReference type="GO" id="GO:0017148">
    <property type="term" value="P:negative regulation of translation"/>
    <property type="evidence" value="ECO:0007669"/>
    <property type="project" value="TreeGrafter"/>
</dbReference>
<dbReference type="GO" id="GO:0006412">
    <property type="term" value="P:translation"/>
    <property type="evidence" value="ECO:0007669"/>
    <property type="project" value="UniProtKB-UniRule"/>
</dbReference>
<dbReference type="CDD" id="cd00392">
    <property type="entry name" value="Ribosomal_L13"/>
    <property type="match status" value="1"/>
</dbReference>
<dbReference type="FunFam" id="3.90.1180.10:FF:000001">
    <property type="entry name" value="50S ribosomal protein L13"/>
    <property type="match status" value="1"/>
</dbReference>
<dbReference type="Gene3D" id="3.90.1180.10">
    <property type="entry name" value="Ribosomal protein L13"/>
    <property type="match status" value="1"/>
</dbReference>
<dbReference type="HAMAP" id="MF_01366">
    <property type="entry name" value="Ribosomal_uL13"/>
    <property type="match status" value="1"/>
</dbReference>
<dbReference type="InterPro" id="IPR005822">
    <property type="entry name" value="Ribosomal_uL13"/>
</dbReference>
<dbReference type="InterPro" id="IPR005823">
    <property type="entry name" value="Ribosomal_uL13_bac-type"/>
</dbReference>
<dbReference type="InterPro" id="IPR023563">
    <property type="entry name" value="Ribosomal_uL13_CS"/>
</dbReference>
<dbReference type="InterPro" id="IPR036899">
    <property type="entry name" value="Ribosomal_uL13_sf"/>
</dbReference>
<dbReference type="NCBIfam" id="TIGR01066">
    <property type="entry name" value="rplM_bact"/>
    <property type="match status" value="1"/>
</dbReference>
<dbReference type="PANTHER" id="PTHR11545:SF2">
    <property type="entry name" value="LARGE RIBOSOMAL SUBUNIT PROTEIN UL13M"/>
    <property type="match status" value="1"/>
</dbReference>
<dbReference type="PANTHER" id="PTHR11545">
    <property type="entry name" value="RIBOSOMAL PROTEIN L13"/>
    <property type="match status" value="1"/>
</dbReference>
<dbReference type="Pfam" id="PF00572">
    <property type="entry name" value="Ribosomal_L13"/>
    <property type="match status" value="1"/>
</dbReference>
<dbReference type="PIRSF" id="PIRSF002181">
    <property type="entry name" value="Ribosomal_L13"/>
    <property type="match status" value="1"/>
</dbReference>
<dbReference type="SUPFAM" id="SSF52161">
    <property type="entry name" value="Ribosomal protein L13"/>
    <property type="match status" value="1"/>
</dbReference>
<dbReference type="PROSITE" id="PS00783">
    <property type="entry name" value="RIBOSOMAL_L13"/>
    <property type="match status" value="1"/>
</dbReference>
<comment type="function">
    <text evidence="1">This protein is one of the early assembly proteins of the 50S ribosomal subunit, although it is not seen to bind rRNA by itself. It is important during the early stages of 50S assembly.</text>
</comment>
<comment type="subunit">
    <text evidence="1">Part of the 50S ribosomal subunit.</text>
</comment>
<comment type="similarity">
    <text evidence="1">Belongs to the universal ribosomal protein uL13 family.</text>
</comment>
<gene>
    <name evidence="1" type="primary">rplM</name>
    <name type="ordered locus">BCA_0173</name>
</gene>
<evidence type="ECO:0000255" key="1">
    <source>
        <dbReference type="HAMAP-Rule" id="MF_01366"/>
    </source>
</evidence>
<evidence type="ECO:0000305" key="2"/>
<feature type="chain" id="PRO_1000166849" description="Large ribosomal subunit protein uL13">
    <location>
        <begin position="1"/>
        <end position="145"/>
    </location>
</feature>
<reference key="1">
    <citation type="submission" date="2009-02" db="EMBL/GenBank/DDBJ databases">
        <title>Genome sequence of Bacillus cereus 03BB102.</title>
        <authorList>
            <person name="Dodson R.J."/>
            <person name="Jackson P."/>
            <person name="Munk A.C."/>
            <person name="Brettin T."/>
            <person name="Bruce D."/>
            <person name="Detter C."/>
            <person name="Tapia R."/>
            <person name="Han C."/>
            <person name="Sutton G."/>
            <person name="Sims D."/>
        </authorList>
    </citation>
    <scope>NUCLEOTIDE SEQUENCE [LARGE SCALE GENOMIC DNA]</scope>
    <source>
        <strain>03BB102</strain>
    </source>
</reference>
<sequence>MRTTFMAKANEVERKWYVVDAEGQTLGRLASEVASILRGKNKPTFTPHVDTGDHVIIINAEKIHLTGNKLNDKIYYRHTNHPGGLKQRTALEMRTNYPVQMLELAIKGMLPKGRLGRQVSKKLNVYAGAEHPHQAQKPEVYELRG</sequence>